<gene>
    <name evidence="1" type="primary">mraY</name>
    <name type="ordered locus">lin2143</name>
</gene>
<name>MRAY_LISIN</name>
<organism>
    <name type="scientific">Listeria innocua serovar 6a (strain ATCC BAA-680 / CLIP 11262)</name>
    <dbReference type="NCBI Taxonomy" id="272626"/>
    <lineage>
        <taxon>Bacteria</taxon>
        <taxon>Bacillati</taxon>
        <taxon>Bacillota</taxon>
        <taxon>Bacilli</taxon>
        <taxon>Bacillales</taxon>
        <taxon>Listeriaceae</taxon>
        <taxon>Listeria</taxon>
    </lineage>
</organism>
<feature type="chain" id="PRO_0000108848" description="Phospho-N-acetylmuramoyl-pentapeptide-transferase">
    <location>
        <begin position="1"/>
        <end position="324"/>
    </location>
</feature>
<feature type="transmembrane region" description="Helical" evidence="1">
    <location>
        <begin position="9"/>
        <end position="29"/>
    </location>
</feature>
<feature type="transmembrane region" description="Helical" evidence="1">
    <location>
        <begin position="53"/>
        <end position="73"/>
    </location>
</feature>
<feature type="transmembrane region" description="Helical" evidence="1">
    <location>
        <begin position="77"/>
        <end position="97"/>
    </location>
</feature>
<feature type="transmembrane region" description="Helical" evidence="1">
    <location>
        <begin position="117"/>
        <end position="137"/>
    </location>
</feature>
<feature type="transmembrane region" description="Helical" evidence="1">
    <location>
        <begin position="149"/>
        <end position="169"/>
    </location>
</feature>
<feature type="transmembrane region" description="Helical" evidence="1">
    <location>
        <begin position="176"/>
        <end position="196"/>
    </location>
</feature>
<feature type="transmembrane region" description="Helical" evidence="1">
    <location>
        <begin position="201"/>
        <end position="221"/>
    </location>
</feature>
<feature type="transmembrane region" description="Helical" evidence="1">
    <location>
        <begin position="227"/>
        <end position="247"/>
    </location>
</feature>
<feature type="transmembrane region" description="Helical" evidence="1">
    <location>
        <begin position="253"/>
        <end position="273"/>
    </location>
</feature>
<feature type="transmembrane region" description="Helical" evidence="1">
    <location>
        <begin position="304"/>
        <end position="324"/>
    </location>
</feature>
<protein>
    <recommendedName>
        <fullName evidence="1">Phospho-N-acetylmuramoyl-pentapeptide-transferase</fullName>
        <ecNumber evidence="1">2.7.8.13</ecNumber>
    </recommendedName>
    <alternativeName>
        <fullName evidence="1">UDP-MurNAc-pentapeptide phosphotransferase</fullName>
    </alternativeName>
</protein>
<comment type="function">
    <text evidence="1">Catalyzes the initial step of the lipid cycle reactions in the biosynthesis of the cell wall peptidoglycan: transfers peptidoglycan precursor phospho-MurNAc-pentapeptide from UDP-MurNAc-pentapeptide onto the lipid carrier undecaprenyl phosphate, yielding undecaprenyl-pyrophosphoryl-MurNAc-pentapeptide, known as lipid I.</text>
</comment>
<comment type="catalytic activity">
    <reaction evidence="1">
        <text>UDP-N-acetyl-alpha-D-muramoyl-L-alanyl-gamma-D-glutamyl-meso-2,6-diaminopimeloyl-D-alanyl-D-alanine + di-trans,octa-cis-undecaprenyl phosphate = di-trans,octa-cis-undecaprenyl diphospho-N-acetyl-alpha-D-muramoyl-L-alanyl-D-glutamyl-meso-2,6-diaminopimeloyl-D-alanyl-D-alanine + UMP</text>
        <dbReference type="Rhea" id="RHEA:28386"/>
        <dbReference type="ChEBI" id="CHEBI:57865"/>
        <dbReference type="ChEBI" id="CHEBI:60392"/>
        <dbReference type="ChEBI" id="CHEBI:61386"/>
        <dbReference type="ChEBI" id="CHEBI:61387"/>
        <dbReference type="EC" id="2.7.8.13"/>
    </reaction>
</comment>
<comment type="cofactor">
    <cofactor evidence="1">
        <name>Mg(2+)</name>
        <dbReference type="ChEBI" id="CHEBI:18420"/>
    </cofactor>
</comment>
<comment type="pathway">
    <text evidence="1">Cell wall biogenesis; peptidoglycan biosynthesis.</text>
</comment>
<comment type="subcellular location">
    <subcellularLocation>
        <location evidence="1">Cell membrane</location>
        <topology evidence="1">Multi-pass membrane protein</topology>
    </subcellularLocation>
</comment>
<comment type="similarity">
    <text evidence="1">Belongs to the glycosyltransferase 4 family. MraY subfamily.</text>
</comment>
<evidence type="ECO:0000255" key="1">
    <source>
        <dbReference type="HAMAP-Rule" id="MF_00038"/>
    </source>
</evidence>
<proteinExistence type="inferred from homology"/>
<reference key="1">
    <citation type="journal article" date="2001" name="Science">
        <title>Comparative genomics of Listeria species.</title>
        <authorList>
            <person name="Glaser P."/>
            <person name="Frangeul L."/>
            <person name="Buchrieser C."/>
            <person name="Rusniok C."/>
            <person name="Amend A."/>
            <person name="Baquero F."/>
            <person name="Berche P."/>
            <person name="Bloecker H."/>
            <person name="Brandt P."/>
            <person name="Chakraborty T."/>
            <person name="Charbit A."/>
            <person name="Chetouani F."/>
            <person name="Couve E."/>
            <person name="de Daruvar A."/>
            <person name="Dehoux P."/>
            <person name="Domann E."/>
            <person name="Dominguez-Bernal G."/>
            <person name="Duchaud E."/>
            <person name="Durant L."/>
            <person name="Dussurget O."/>
            <person name="Entian K.-D."/>
            <person name="Fsihi H."/>
            <person name="Garcia-del Portillo F."/>
            <person name="Garrido P."/>
            <person name="Gautier L."/>
            <person name="Goebel W."/>
            <person name="Gomez-Lopez N."/>
            <person name="Hain T."/>
            <person name="Hauf J."/>
            <person name="Jackson D."/>
            <person name="Jones L.-M."/>
            <person name="Kaerst U."/>
            <person name="Kreft J."/>
            <person name="Kuhn M."/>
            <person name="Kunst F."/>
            <person name="Kurapkat G."/>
            <person name="Madueno E."/>
            <person name="Maitournam A."/>
            <person name="Mata Vicente J."/>
            <person name="Ng E."/>
            <person name="Nedjari H."/>
            <person name="Nordsiek G."/>
            <person name="Novella S."/>
            <person name="de Pablos B."/>
            <person name="Perez-Diaz J.-C."/>
            <person name="Purcell R."/>
            <person name="Remmel B."/>
            <person name="Rose M."/>
            <person name="Schlueter T."/>
            <person name="Simoes N."/>
            <person name="Tierrez A."/>
            <person name="Vazquez-Boland J.-A."/>
            <person name="Voss H."/>
            <person name="Wehland J."/>
            <person name="Cossart P."/>
        </authorList>
    </citation>
    <scope>NUCLEOTIDE SEQUENCE [LARGE SCALE GENOMIC DNA]</scope>
    <source>
        <strain>ATCC BAA-680 / CLIP 11262</strain>
    </source>
</reference>
<keyword id="KW-0131">Cell cycle</keyword>
<keyword id="KW-0132">Cell division</keyword>
<keyword id="KW-1003">Cell membrane</keyword>
<keyword id="KW-0133">Cell shape</keyword>
<keyword id="KW-0961">Cell wall biogenesis/degradation</keyword>
<keyword id="KW-0460">Magnesium</keyword>
<keyword id="KW-0472">Membrane</keyword>
<keyword id="KW-0479">Metal-binding</keyword>
<keyword id="KW-0573">Peptidoglycan synthesis</keyword>
<keyword id="KW-0808">Transferase</keyword>
<keyword id="KW-0812">Transmembrane</keyword>
<keyword id="KW-1133">Transmembrane helix</keyword>
<accession>Q929Y0</accession>
<sequence>MSLYMLVSTFAVAFIITVIGVPLFIPFLVKLKFGQSIRDEGPKMHEKKSGTPTMGAVIFITAMLISFLIFSFISGEVSAATWLLFITLALFGALGFLDDYIKVVQKRNLGLTSKQKFLGQVAISILFYLVYHFSDFAETLKIPFTNTEIDLGWFFIIFILFWLVGFSNAVNLTDGLDGLVSGLSVIAFSAFGVIAFYQEQMDVAIFCFAIVGGMLGFLLFNKNPAKIFMGDTGSLALGGSIAAVSILVHQEWLLLLIGIIFVIETASVILQVFYFKATGGKRIFRMTPIHHHFELGGWSEWRVVLTFWGIGLIGAIISVCVVIF</sequence>
<dbReference type="EC" id="2.7.8.13" evidence="1"/>
<dbReference type="EMBL" id="AL596171">
    <property type="protein sequence ID" value="CAC97373.1"/>
    <property type="molecule type" value="Genomic_DNA"/>
</dbReference>
<dbReference type="PIR" id="AE1700">
    <property type="entry name" value="AE1700"/>
</dbReference>
<dbReference type="RefSeq" id="WP_010991029.1">
    <property type="nucleotide sequence ID" value="NC_003212.1"/>
</dbReference>
<dbReference type="SMR" id="Q929Y0"/>
<dbReference type="STRING" id="272626.gene:17566501"/>
<dbReference type="DNASU" id="1130871"/>
<dbReference type="GeneID" id="93235482"/>
<dbReference type="KEGG" id="lin:mraY"/>
<dbReference type="eggNOG" id="COG0472">
    <property type="taxonomic scope" value="Bacteria"/>
</dbReference>
<dbReference type="HOGENOM" id="CLU_023982_0_1_9"/>
<dbReference type="OrthoDB" id="9805475at2"/>
<dbReference type="UniPathway" id="UPA00219"/>
<dbReference type="Proteomes" id="UP000002513">
    <property type="component" value="Chromosome"/>
</dbReference>
<dbReference type="GO" id="GO:0005886">
    <property type="term" value="C:plasma membrane"/>
    <property type="evidence" value="ECO:0007669"/>
    <property type="project" value="UniProtKB-SubCell"/>
</dbReference>
<dbReference type="GO" id="GO:0046872">
    <property type="term" value="F:metal ion binding"/>
    <property type="evidence" value="ECO:0007669"/>
    <property type="project" value="UniProtKB-KW"/>
</dbReference>
<dbReference type="GO" id="GO:0008963">
    <property type="term" value="F:phospho-N-acetylmuramoyl-pentapeptide-transferase activity"/>
    <property type="evidence" value="ECO:0007669"/>
    <property type="project" value="UniProtKB-UniRule"/>
</dbReference>
<dbReference type="GO" id="GO:0051992">
    <property type="term" value="F:UDP-N-acetylmuramoyl-L-alanyl-D-glutamyl-meso-2,6-diaminopimelyl-D-alanyl-D-alanine:undecaprenyl-phosphate transferase activity"/>
    <property type="evidence" value="ECO:0007669"/>
    <property type="project" value="RHEA"/>
</dbReference>
<dbReference type="GO" id="GO:0051301">
    <property type="term" value="P:cell division"/>
    <property type="evidence" value="ECO:0007669"/>
    <property type="project" value="UniProtKB-KW"/>
</dbReference>
<dbReference type="GO" id="GO:0071555">
    <property type="term" value="P:cell wall organization"/>
    <property type="evidence" value="ECO:0007669"/>
    <property type="project" value="UniProtKB-KW"/>
</dbReference>
<dbReference type="GO" id="GO:0009252">
    <property type="term" value="P:peptidoglycan biosynthetic process"/>
    <property type="evidence" value="ECO:0007669"/>
    <property type="project" value="UniProtKB-UniRule"/>
</dbReference>
<dbReference type="GO" id="GO:0008360">
    <property type="term" value="P:regulation of cell shape"/>
    <property type="evidence" value="ECO:0007669"/>
    <property type="project" value="UniProtKB-KW"/>
</dbReference>
<dbReference type="CDD" id="cd06852">
    <property type="entry name" value="GT_MraY"/>
    <property type="match status" value="1"/>
</dbReference>
<dbReference type="HAMAP" id="MF_00038">
    <property type="entry name" value="MraY"/>
    <property type="match status" value="1"/>
</dbReference>
<dbReference type="InterPro" id="IPR000715">
    <property type="entry name" value="Glycosyl_transferase_4"/>
</dbReference>
<dbReference type="InterPro" id="IPR003524">
    <property type="entry name" value="PNAcMuramoyl-5peptid_Trfase"/>
</dbReference>
<dbReference type="InterPro" id="IPR018480">
    <property type="entry name" value="PNAcMuramoyl-5peptid_Trfase_CS"/>
</dbReference>
<dbReference type="NCBIfam" id="TIGR00445">
    <property type="entry name" value="mraY"/>
    <property type="match status" value="1"/>
</dbReference>
<dbReference type="PANTHER" id="PTHR22926">
    <property type="entry name" value="PHOSPHO-N-ACETYLMURAMOYL-PENTAPEPTIDE-TRANSFERASE"/>
    <property type="match status" value="1"/>
</dbReference>
<dbReference type="PANTHER" id="PTHR22926:SF5">
    <property type="entry name" value="PHOSPHO-N-ACETYLMURAMOYL-PENTAPEPTIDE-TRANSFERASE HOMOLOG"/>
    <property type="match status" value="1"/>
</dbReference>
<dbReference type="Pfam" id="PF00953">
    <property type="entry name" value="Glycos_transf_4"/>
    <property type="match status" value="1"/>
</dbReference>
<dbReference type="PROSITE" id="PS01348">
    <property type="entry name" value="MRAY_2"/>
    <property type="match status" value="1"/>
</dbReference>